<protein>
    <recommendedName>
        <fullName>UDP-glycosyltransferase 79B5</fullName>
        <ecNumber>2.4.1.-</ecNumber>
    </recommendedName>
</protein>
<proteinExistence type="evidence at transcript level"/>
<name>U79B5_ARATH</name>
<feature type="chain" id="PRO_0000409111" description="UDP-glycosyltransferase 79B5">
    <location>
        <begin position="1"/>
        <end position="448"/>
    </location>
</feature>
<feature type="binding site" evidence="1">
    <location>
        <position position="261"/>
    </location>
    <ligand>
        <name>UDP-alpha-D-glucose</name>
        <dbReference type="ChEBI" id="CHEBI:58885"/>
    </ligand>
</feature>
<feature type="binding site" evidence="1">
    <location>
        <begin position="320"/>
        <end position="322"/>
    </location>
    <ligand>
        <name>UDP-alpha-D-glucose</name>
        <dbReference type="ChEBI" id="CHEBI:58885"/>
    </ligand>
</feature>
<feature type="binding site" evidence="1">
    <location>
        <begin position="337"/>
        <end position="345"/>
    </location>
    <ligand>
        <name>UDP-alpha-D-glucose</name>
        <dbReference type="ChEBI" id="CHEBI:58885"/>
    </ligand>
</feature>
<feature type="binding site" evidence="1">
    <location>
        <begin position="359"/>
        <end position="362"/>
    </location>
    <ligand>
        <name>UDP-alpha-D-glucose</name>
        <dbReference type="ChEBI" id="CHEBI:58885"/>
    </ligand>
</feature>
<organism>
    <name type="scientific">Arabidopsis thaliana</name>
    <name type="common">Mouse-ear cress</name>
    <dbReference type="NCBI Taxonomy" id="3702"/>
    <lineage>
        <taxon>Eukaryota</taxon>
        <taxon>Viridiplantae</taxon>
        <taxon>Streptophyta</taxon>
        <taxon>Embryophyta</taxon>
        <taxon>Tracheophyta</taxon>
        <taxon>Spermatophyta</taxon>
        <taxon>Magnoliopsida</taxon>
        <taxon>eudicotyledons</taxon>
        <taxon>Gunneridae</taxon>
        <taxon>Pentapetalae</taxon>
        <taxon>rosids</taxon>
        <taxon>malvids</taxon>
        <taxon>Brassicales</taxon>
        <taxon>Brassicaceae</taxon>
        <taxon>Camelineae</taxon>
        <taxon>Arabidopsis</taxon>
    </lineage>
</organism>
<comment type="similarity">
    <text evidence="2">Belongs to the UDP-glycosyltransferase family.</text>
</comment>
<reference key="1">
    <citation type="journal article" date="2000" name="Nature">
        <title>Sequence and analysis of chromosome 1 of the plant Arabidopsis thaliana.</title>
        <authorList>
            <person name="Theologis A."/>
            <person name="Ecker J.R."/>
            <person name="Palm C.J."/>
            <person name="Federspiel N.A."/>
            <person name="Kaul S."/>
            <person name="White O."/>
            <person name="Alonso J."/>
            <person name="Altafi H."/>
            <person name="Araujo R."/>
            <person name="Bowman C.L."/>
            <person name="Brooks S.Y."/>
            <person name="Buehler E."/>
            <person name="Chan A."/>
            <person name="Chao Q."/>
            <person name="Chen H."/>
            <person name="Cheuk R.F."/>
            <person name="Chin C.W."/>
            <person name="Chung M.K."/>
            <person name="Conn L."/>
            <person name="Conway A.B."/>
            <person name="Conway A.R."/>
            <person name="Creasy T.H."/>
            <person name="Dewar K."/>
            <person name="Dunn P."/>
            <person name="Etgu P."/>
            <person name="Feldblyum T.V."/>
            <person name="Feng J.-D."/>
            <person name="Fong B."/>
            <person name="Fujii C.Y."/>
            <person name="Gill J.E."/>
            <person name="Goldsmith A.D."/>
            <person name="Haas B."/>
            <person name="Hansen N.F."/>
            <person name="Hughes B."/>
            <person name="Huizar L."/>
            <person name="Hunter J.L."/>
            <person name="Jenkins J."/>
            <person name="Johnson-Hopson C."/>
            <person name="Khan S."/>
            <person name="Khaykin E."/>
            <person name="Kim C.J."/>
            <person name="Koo H.L."/>
            <person name="Kremenetskaia I."/>
            <person name="Kurtz D.B."/>
            <person name="Kwan A."/>
            <person name="Lam B."/>
            <person name="Langin-Hooper S."/>
            <person name="Lee A."/>
            <person name="Lee J.M."/>
            <person name="Lenz C.A."/>
            <person name="Li J.H."/>
            <person name="Li Y.-P."/>
            <person name="Lin X."/>
            <person name="Liu S.X."/>
            <person name="Liu Z.A."/>
            <person name="Luros J.S."/>
            <person name="Maiti R."/>
            <person name="Marziali A."/>
            <person name="Militscher J."/>
            <person name="Miranda M."/>
            <person name="Nguyen M."/>
            <person name="Nierman W.C."/>
            <person name="Osborne B.I."/>
            <person name="Pai G."/>
            <person name="Peterson J."/>
            <person name="Pham P.K."/>
            <person name="Rizzo M."/>
            <person name="Rooney T."/>
            <person name="Rowley D."/>
            <person name="Sakano H."/>
            <person name="Salzberg S.L."/>
            <person name="Schwartz J.R."/>
            <person name="Shinn P."/>
            <person name="Southwick A.M."/>
            <person name="Sun H."/>
            <person name="Tallon L.J."/>
            <person name="Tambunga G."/>
            <person name="Toriumi M.J."/>
            <person name="Town C.D."/>
            <person name="Utterback T."/>
            <person name="Van Aken S."/>
            <person name="Vaysberg M."/>
            <person name="Vysotskaia V.S."/>
            <person name="Walker M."/>
            <person name="Wu D."/>
            <person name="Yu G."/>
            <person name="Fraser C.M."/>
            <person name="Venter J.C."/>
            <person name="Davis R.W."/>
        </authorList>
    </citation>
    <scope>NUCLEOTIDE SEQUENCE [LARGE SCALE GENOMIC DNA]</scope>
    <source>
        <strain>cv. Columbia</strain>
    </source>
</reference>
<reference key="2">
    <citation type="journal article" date="2017" name="Plant J.">
        <title>Araport11: a complete reannotation of the Arabidopsis thaliana reference genome.</title>
        <authorList>
            <person name="Cheng C.Y."/>
            <person name="Krishnakumar V."/>
            <person name="Chan A.P."/>
            <person name="Thibaud-Nissen F."/>
            <person name="Schobel S."/>
            <person name="Town C.D."/>
        </authorList>
    </citation>
    <scope>GENOME REANNOTATION</scope>
    <source>
        <strain>cv. Columbia</strain>
    </source>
</reference>
<reference key="3">
    <citation type="journal article" date="2001" name="J. Biol. Chem.">
        <title>Phylogenetic analysis of the UDP-glycosyltransferase multigene family of Arabidopsis thaliana.</title>
        <authorList>
            <person name="Li Y."/>
            <person name="Baldauf S."/>
            <person name="Lim E.K."/>
            <person name="Bowles D.J."/>
        </authorList>
    </citation>
    <scope>GENE FAMILY</scope>
</reference>
<accession>Q9LPS8</accession>
<keyword id="KW-0328">Glycosyltransferase</keyword>
<keyword id="KW-1185">Reference proteome</keyword>
<keyword id="KW-0808">Transferase</keyword>
<gene>
    <name type="primary">UGT79B5</name>
    <name type="ordered locus">At1g50580</name>
    <name type="ORF">F11F12.10</name>
    <name type="ORF">F17J6.10</name>
</gene>
<sequence length="448" mass="50465">MGSKFHAFMYPWFGFGHMIPYLHLANKLAEKGHRVTFFLPKKAHKQLQPLNLFPDSIVFEPLTLPPVDGLPFGAETASDLPNSTKKPIFVAMDLLRDQIEAKVRALKPDLIFFDFVHWVPEMAEEFGIKSVNYQIISAACVAMVLAPRAELGFPPPDYPLSKVALRGHEANVCSLFANSHELFGLITKGLKNCDVVSIRTCVELEGKLCGFIEKECQKKLLLTGPMLPEPQNKSGKFLEDRWNHWLNGFEPGSVVFCAFGTQFFFEKDQFQEFCLGMELMGLPFLISVMPPKGSPTVQEALPKGFEERVKKHGIVWEGWLEQPLILSHPSVGCFVNHCGFGSMWESLVSDCQIVFIPQLADQVLITRLLTEELEVSVKVQREDSGWFSKEDLRDTVKSVMDIDSEIGNLVKRNHKKLKETLVSPGLLSGYADKFVEALEIEVNNTKFS</sequence>
<evidence type="ECO:0000250" key="1"/>
<evidence type="ECO:0000305" key="2"/>
<dbReference type="EC" id="2.4.1.-"/>
<dbReference type="EMBL" id="AC012561">
    <property type="protein sequence ID" value="AAF87877.1"/>
    <property type="molecule type" value="Genomic_DNA"/>
</dbReference>
<dbReference type="EMBL" id="AC079279">
    <property type="protein sequence ID" value="AAG51184.1"/>
    <property type="molecule type" value="Genomic_DNA"/>
</dbReference>
<dbReference type="EMBL" id="CP002684">
    <property type="protein sequence ID" value="AEE32566.1"/>
    <property type="molecule type" value="Genomic_DNA"/>
</dbReference>
<dbReference type="PIR" id="C96542">
    <property type="entry name" value="C96542"/>
</dbReference>
<dbReference type="RefSeq" id="NP_175473.1">
    <property type="nucleotide sequence ID" value="NM_103940.2"/>
</dbReference>
<dbReference type="SMR" id="Q9LPS8"/>
<dbReference type="FunCoup" id="Q9LPS8">
    <property type="interactions" value="10"/>
</dbReference>
<dbReference type="STRING" id="3702.Q9LPS8"/>
<dbReference type="CAZy" id="GT1">
    <property type="family name" value="Glycosyltransferase Family 1"/>
</dbReference>
<dbReference type="PaxDb" id="3702-AT1G50580.1"/>
<dbReference type="ProteomicsDB" id="228708"/>
<dbReference type="EnsemblPlants" id="AT1G50580.1">
    <property type="protein sequence ID" value="AT1G50580.1"/>
    <property type="gene ID" value="AT1G50580"/>
</dbReference>
<dbReference type="GeneID" id="841480"/>
<dbReference type="Gramene" id="AT1G50580.1">
    <property type="protein sequence ID" value="AT1G50580.1"/>
    <property type="gene ID" value="AT1G50580"/>
</dbReference>
<dbReference type="KEGG" id="ath:AT1G50580"/>
<dbReference type="Araport" id="AT1G50580"/>
<dbReference type="TAIR" id="AT1G50580"/>
<dbReference type="eggNOG" id="KOG1192">
    <property type="taxonomic scope" value="Eukaryota"/>
</dbReference>
<dbReference type="HOGENOM" id="CLU_001724_2_3_1"/>
<dbReference type="InParanoid" id="Q9LPS8"/>
<dbReference type="OMA" id="VHWVPEM"/>
<dbReference type="PhylomeDB" id="Q9LPS8"/>
<dbReference type="BioCyc" id="ARA:AT1G50580-MONOMER"/>
<dbReference type="PRO" id="PR:Q9LPS8"/>
<dbReference type="Proteomes" id="UP000006548">
    <property type="component" value="Chromosome 1"/>
</dbReference>
<dbReference type="ExpressionAtlas" id="Q9LPS8">
    <property type="expression patterns" value="baseline and differential"/>
</dbReference>
<dbReference type="GO" id="GO:0035251">
    <property type="term" value="F:UDP-glucosyltransferase activity"/>
    <property type="evidence" value="ECO:0007669"/>
    <property type="project" value="InterPro"/>
</dbReference>
<dbReference type="CDD" id="cd03784">
    <property type="entry name" value="GT1_Gtf-like"/>
    <property type="match status" value="1"/>
</dbReference>
<dbReference type="FunFam" id="3.40.50.2000:FF:000037">
    <property type="entry name" value="Glycosyltransferase"/>
    <property type="match status" value="1"/>
</dbReference>
<dbReference type="FunFam" id="3.40.50.2000:FF:000087">
    <property type="entry name" value="Glycosyltransferase"/>
    <property type="match status" value="1"/>
</dbReference>
<dbReference type="Gene3D" id="3.40.50.2000">
    <property type="entry name" value="Glycogen Phosphorylase B"/>
    <property type="match status" value="2"/>
</dbReference>
<dbReference type="InterPro" id="IPR050481">
    <property type="entry name" value="UDP-glycosyltransf_plant"/>
</dbReference>
<dbReference type="InterPro" id="IPR002213">
    <property type="entry name" value="UDP_glucos_trans"/>
</dbReference>
<dbReference type="PANTHER" id="PTHR48049">
    <property type="entry name" value="GLYCOSYLTRANSFERASE"/>
    <property type="match status" value="1"/>
</dbReference>
<dbReference type="PANTHER" id="PTHR48049:SF20">
    <property type="entry name" value="UDP-GLYCOSYLTRANSFERASE 79B4-RELATED"/>
    <property type="match status" value="1"/>
</dbReference>
<dbReference type="Pfam" id="PF00201">
    <property type="entry name" value="UDPGT"/>
    <property type="match status" value="1"/>
</dbReference>
<dbReference type="SUPFAM" id="SSF53756">
    <property type="entry name" value="UDP-Glycosyltransferase/glycogen phosphorylase"/>
    <property type="match status" value="1"/>
</dbReference>